<name>BL1S1_HUMAN</name>
<feature type="chain" id="PRO_0000156331" description="Biogenesis of lysosome-related organelles complex 1 subunit 1">
    <location>
        <begin position="1"/>
        <end position="153"/>
    </location>
</feature>
<feature type="region of interest" description="Disordered" evidence="3">
    <location>
        <begin position="1"/>
        <end position="27"/>
    </location>
</feature>
<feature type="coiled-coil region" evidence="2">
    <location>
        <begin position="27"/>
        <end position="59"/>
    </location>
</feature>
<feature type="compositionally biased region" description="Basic and acidic residues" evidence="3">
    <location>
        <begin position="1"/>
        <end position="11"/>
    </location>
</feature>
<feature type="splice variant" id="VSP_040954" description="In isoform 2." evidence="10 12">
    <location>
        <begin position="1"/>
        <end position="28"/>
    </location>
</feature>
<keyword id="KW-0024">Alternative initiation</keyword>
<keyword id="KW-0175">Coiled coil</keyword>
<keyword id="KW-0963">Cytoplasm</keyword>
<keyword id="KW-0458">Lysosome</keyword>
<keyword id="KW-0472">Membrane</keyword>
<keyword id="KW-0496">Mitochondrion</keyword>
<keyword id="KW-1267">Proteomics identification</keyword>
<keyword id="KW-1185">Reference proteome</keyword>
<keyword id="KW-0808">Transferase</keyword>
<comment type="function">
    <text evidence="5 8">Component of the BLOC-1 complex, a complex that is required for normal biogenesis of lysosome-related organelles (LRO), such as platelet dense granules and melanosomes (PubMed:17182842). In concert with the AP-3 complex, the BLOC-1 complex is required to target membrane protein cargos into vesicles assembled at cell bodies for delivery into neurites and nerve terminals (PubMed:17182842). The BLOC-1 complex, in association with SNARE proteins, is also proposed to be involved in neurite extension (PubMed:17182842). As part of the BORC complex may play a role in lysosomes movement and localization at the cell periphery (PubMed:25898167). Associated with the cytosolic face of lysosomes, the BORC complex may recruit ARL8B and couple lysosomes to microtubule plus-end-directed kinesin motor (PubMed:25898167).</text>
</comment>
<comment type="function">
    <text evidence="7 9">Acts as a protein acetyltransferase (PubMed:22309213, PubMed:38281616). Negatively regulates aerobic respiration through mitochondrial protein lysine-acetylation (PubMed:22309213). May counteract the action of the deacetylase SIRT3 by acetylating and regulating proteins of the mitochondrial respiratory chain including ATP5F1A and NDUFA9 (PubMed:22309213). Acts as a regulator of mTORC2 signaling in response to hypotoxic stress by mediating acetylation of RICTOR, thereby protecting RICTOR against ubiquitination and subsequent degradation by the proteasome (PubMed:38281616).</text>
</comment>
<comment type="catalytic activity">
    <reaction evidence="15">
        <text>L-lysyl-[protein] + acetyl-CoA = N(6)-acetyl-L-lysyl-[protein] + CoA + H(+)</text>
        <dbReference type="Rhea" id="RHEA:45948"/>
        <dbReference type="Rhea" id="RHEA-COMP:9752"/>
        <dbReference type="Rhea" id="RHEA-COMP:10731"/>
        <dbReference type="ChEBI" id="CHEBI:15378"/>
        <dbReference type="ChEBI" id="CHEBI:29969"/>
        <dbReference type="ChEBI" id="CHEBI:57287"/>
        <dbReference type="ChEBI" id="CHEBI:57288"/>
        <dbReference type="ChEBI" id="CHEBI:61930"/>
    </reaction>
    <physiologicalReaction direction="left-to-right" evidence="15">
        <dbReference type="Rhea" id="RHEA:45949"/>
    </physiologicalReaction>
</comment>
<comment type="subunit">
    <text evidence="1 4 6 7 8">Component of the biogenesis of lysosome-related organelles complex 1 (BLOC-1) composed of BLOC1S1, BLOC1S2, BLOC1S3, BLOC1S4, BLOC1S5, BLOC1S6, DTNBP1/BLOC1S7 and SNAPIN/BLOC1S8 (PubMed:15102850, PubMed:22203680). Octamer composed of one copy each BLOC1S1, BLOC1S2, BLOC1S3, BLOC1S4, BLOC1S5, BLOC1S6, DTNBP1/BLOC1S7 and SNAPIN/BLOC1S8 (PubMed:15102850, PubMed:22203680). The BLOC-1 complex associates with the AP-3 protein complex and membrane protein cargos (By similarity). Component of the BLOC-one-related complex (BORC) which is composed of BLOC1S1, BLOC1S2, BORCS5, BORCS6, BORCS7, BORCS8, KXD1 and SNAPIN (PubMed:25898167). Interacts with ATP5F1A and NDUFA9; involved in their acetylation on lysine residues (PubMed:22309213). Interacts with KXD1 (By similarity).</text>
</comment>
<comment type="interaction">
    <interactant intactId="EBI-348630">
        <id>P78537</id>
    </interactant>
    <interactant intactId="EBI-351437">
        <id>P25705</id>
        <label>ATP5F1A</label>
    </interactant>
    <organismsDiffer>false</organismsDiffer>
    <experiments>2</experiments>
</comment>
<comment type="interaction">
    <interactant intactId="EBI-348630">
        <id>P78537</id>
    </interactant>
    <interactant intactId="EBI-465872">
        <id>Q6QNY1</id>
        <label>BLOC1S2</label>
    </interactant>
    <organismsDiffer>false</organismsDiffer>
    <experiments>5</experiments>
</comment>
<comment type="interaction">
    <interactant intactId="EBI-348630">
        <id>P78537</id>
    </interactant>
    <interactant intactId="EBI-465781">
        <id>Q9UL45</id>
        <label>BLOC1S6</label>
    </interactant>
    <organismsDiffer>false</organismsDiffer>
    <experiments>20</experiments>
</comment>
<comment type="interaction">
    <interactant intactId="EBI-348630">
        <id>P78537</id>
    </interactant>
    <interactant intactId="EBI-715074">
        <id>Q13561</id>
        <label>DCTN2</label>
    </interactant>
    <organismsDiffer>false</organismsDiffer>
    <experiments>3</experiments>
</comment>
<comment type="interaction">
    <interactant intactId="EBI-348630">
        <id>P78537</id>
    </interactant>
    <interactant intactId="EBI-12104696">
        <id>Q9H4M3-2</id>
        <label>FBXO44</label>
    </interactant>
    <organismsDiffer>false</organismsDiffer>
    <experiments>3</experiments>
</comment>
<comment type="interaction">
    <interactant intactId="EBI-348630">
        <id>P78537</id>
    </interactant>
    <interactant intactId="EBI-740220">
        <id>O14964</id>
        <label>HGS</label>
    </interactant>
    <organismsDiffer>false</organismsDiffer>
    <experiments>3</experiments>
</comment>
<comment type="interaction">
    <interactant intactId="EBI-348630">
        <id>P78537</id>
    </interactant>
    <interactant intactId="EBI-751857">
        <id>O15481</id>
        <label>MAGEB4</label>
    </interactant>
    <organismsDiffer>false</organismsDiffer>
    <experiments>3</experiments>
</comment>
<comment type="interaction">
    <interactant intactId="EBI-348630">
        <id>P78537</id>
    </interactant>
    <interactant intactId="EBI-1045087">
        <id>Q16795</id>
        <label>NDUFA9</label>
    </interactant>
    <organismsDiffer>false</organismsDiffer>
    <experiments>3</experiments>
</comment>
<comment type="interaction">
    <interactant intactId="EBI-348630">
        <id>P78537</id>
    </interactant>
    <interactant intactId="EBI-12004298">
        <id>O75971-2</id>
        <label>SNAPC5</label>
    </interactant>
    <organismsDiffer>false</organismsDiffer>
    <experiments>3</experiments>
</comment>
<comment type="interaction">
    <interactant intactId="EBI-348630">
        <id>P78537</id>
    </interactant>
    <interactant intactId="EBI-296723">
        <id>O95295</id>
        <label>SNAPIN</label>
    </interactant>
    <organismsDiffer>false</organismsDiffer>
    <experiments>8</experiments>
</comment>
<comment type="interaction">
    <interactant intactId="EBI-348630">
        <id>P78537</id>
    </interactant>
    <interactant intactId="EBI-739895">
        <id>Q8N6Y0</id>
        <label>USHBP1</label>
    </interactant>
    <organismsDiffer>false</organismsDiffer>
    <experiments>3</experiments>
</comment>
<comment type="subcellular location">
    <subcellularLocation>
        <location evidence="7">Mitochondrion intermembrane space</location>
    </subcellularLocation>
    <subcellularLocation>
        <location evidence="7">Mitochondrion matrix</location>
    </subcellularLocation>
    <subcellularLocation>
        <location evidence="7">Cytoplasm</location>
        <location evidence="7">Cytosol</location>
    </subcellularLocation>
    <subcellularLocation>
        <location evidence="14">Lysosome membrane</location>
    </subcellularLocation>
</comment>
<comment type="alternative products">
    <event type="alternative initiation"/>
    <isoform>
        <id>P78537-1</id>
        <name>1</name>
        <sequence type="displayed"/>
    </isoform>
    <isoform>
        <id>P78537-2</id>
        <name>2</name>
        <sequence type="described" ref="VSP_040954"/>
    </isoform>
</comment>
<comment type="miscellaneous">
    <molecule>Isoform 2</molecule>
    <text evidence="13">May be produced by alternative initiation at Met-27 of isoform 1. A polymorphism at position 9 leads to the creation of a stop codon. Isoform 2 is the only form that exists in orthologs (except primates).</text>
</comment>
<comment type="similarity">
    <text evidence="13">Belongs to the BLOC1S1 family.</text>
</comment>
<comment type="sequence caution" evidence="13">
    <conflict type="erroneous initiation">
        <sequence resource="EMBL-CDS" id="AAB37682"/>
    </conflict>
    <text>Truncated N-terminus.</text>
</comment>
<dbReference type="EC" id="2.3.1.-" evidence="15"/>
<dbReference type="EMBL" id="D64007">
    <property type="protein sequence ID" value="BAA10887.1"/>
    <property type="molecule type" value="mRNA"/>
</dbReference>
<dbReference type="EMBL" id="AC009779">
    <property type="status" value="NOT_ANNOTATED_CDS"/>
    <property type="molecule type" value="Genomic_DNA"/>
</dbReference>
<dbReference type="EMBL" id="BC130640">
    <property type="protein sequence ID" value="AAI30641.1"/>
    <property type="molecule type" value="mRNA"/>
</dbReference>
<dbReference type="EMBL" id="BC132795">
    <property type="protein sequence ID" value="AAI32796.1"/>
    <property type="molecule type" value="mRNA"/>
</dbReference>
<dbReference type="EMBL" id="S82447">
    <property type="protein sequence ID" value="AAB37682.1"/>
    <property type="status" value="ALT_INIT"/>
    <property type="molecule type" value="mRNA"/>
</dbReference>
<dbReference type="CCDS" id="CCDS8889.2">
    <molecule id="P78537-1"/>
</dbReference>
<dbReference type="PIR" id="JC4392">
    <property type="entry name" value="JC4392"/>
</dbReference>
<dbReference type="RefSeq" id="NP_001478.2">
    <molecule id="P78537-1"/>
    <property type="nucleotide sequence ID" value="NM_001487.4"/>
</dbReference>
<dbReference type="SMR" id="P78537"/>
<dbReference type="BioGRID" id="108917">
    <property type="interactions" value="48"/>
</dbReference>
<dbReference type="ComplexPortal" id="CPX-1910">
    <property type="entry name" value="BLOC-1 complex"/>
</dbReference>
<dbReference type="ComplexPortal" id="CPX-5029">
    <property type="entry name" value="BORC complex"/>
</dbReference>
<dbReference type="CORUM" id="P78537"/>
<dbReference type="FunCoup" id="P78537">
    <property type="interactions" value="489"/>
</dbReference>
<dbReference type="IntAct" id="P78537">
    <property type="interactions" value="42"/>
</dbReference>
<dbReference type="MINT" id="P78537"/>
<dbReference type="STRING" id="9606.ENSP00000447537"/>
<dbReference type="iPTMnet" id="P78537"/>
<dbReference type="PhosphoSitePlus" id="P78537"/>
<dbReference type="BioMuta" id="BLOC1S1"/>
<dbReference type="DMDM" id="332278161"/>
<dbReference type="jPOST" id="P78537"/>
<dbReference type="MassIVE" id="P78537"/>
<dbReference type="PaxDb" id="9606-ENSP00000447537"/>
<dbReference type="PeptideAtlas" id="P78537"/>
<dbReference type="ProteomicsDB" id="57639">
    <molecule id="P78537-1"/>
</dbReference>
<dbReference type="ProteomicsDB" id="57640">
    <molecule id="P78537-2"/>
</dbReference>
<dbReference type="Pumba" id="P78537"/>
<dbReference type="Antibodypedia" id="15519">
    <property type="antibodies" value="86 antibodies from 19 providers"/>
</dbReference>
<dbReference type="DNASU" id="2647"/>
<dbReference type="Ensembl" id="ENST00000548925.6">
    <molecule id="P78537-1"/>
    <property type="protein sequence ID" value="ENSP00000447537.1"/>
    <property type="gene ID" value="ENSG00000135441.8"/>
</dbReference>
<dbReference type="GeneID" id="2647"/>
<dbReference type="KEGG" id="hsa:2647"/>
<dbReference type="MANE-Select" id="ENST00000548925.6">
    <property type="protein sequence ID" value="ENSP00000447537.1"/>
    <property type="RefSeq nucleotide sequence ID" value="NM_001487.4"/>
    <property type="RefSeq protein sequence ID" value="NP_001478.2"/>
</dbReference>
<dbReference type="UCSC" id="uc001shi.5">
    <molecule id="P78537-1"/>
    <property type="organism name" value="human"/>
</dbReference>
<dbReference type="AGR" id="HGNC:4200"/>
<dbReference type="CTD" id="2647"/>
<dbReference type="DisGeNET" id="2647"/>
<dbReference type="GeneCards" id="BLOC1S1"/>
<dbReference type="HGNC" id="HGNC:4200">
    <property type="gene designation" value="BLOC1S1"/>
</dbReference>
<dbReference type="HPA" id="ENSG00000135441">
    <property type="expression patterns" value="Low tissue specificity"/>
</dbReference>
<dbReference type="MalaCards" id="BLOC1S1"/>
<dbReference type="MIM" id="601444">
    <property type="type" value="gene"/>
</dbReference>
<dbReference type="neXtProt" id="NX_P78537"/>
<dbReference type="OpenTargets" id="ENSG00000135441"/>
<dbReference type="PharmGKB" id="PA28617"/>
<dbReference type="VEuPathDB" id="HostDB:ENSG00000135441"/>
<dbReference type="eggNOG" id="KOG3390">
    <property type="taxonomic scope" value="Eukaryota"/>
</dbReference>
<dbReference type="GeneTree" id="ENSGT00390000002689"/>
<dbReference type="HOGENOM" id="CLU_115602_3_0_1"/>
<dbReference type="InParanoid" id="P78537"/>
<dbReference type="OMA" id="THAMNSA"/>
<dbReference type="OrthoDB" id="20018at2759"/>
<dbReference type="PAN-GO" id="P78537">
    <property type="GO annotations" value="2 GO annotations based on evolutionary models"/>
</dbReference>
<dbReference type="PhylomeDB" id="P78537"/>
<dbReference type="TreeFam" id="TF314443"/>
<dbReference type="PathwayCommons" id="P78537"/>
<dbReference type="Reactome" id="R-HSA-432720">
    <property type="pathway name" value="Lysosome Vesicle Biogenesis"/>
</dbReference>
<dbReference type="Reactome" id="R-HSA-432722">
    <property type="pathway name" value="Golgi Associated Vesicle Biogenesis"/>
</dbReference>
<dbReference type="SignaLink" id="P78537"/>
<dbReference type="SIGNOR" id="P78537"/>
<dbReference type="BioGRID-ORCS" id="2647">
    <property type="hits" value="18 hits in 1146 CRISPR screens"/>
</dbReference>
<dbReference type="GeneWiki" id="BLOC1S1"/>
<dbReference type="GenomeRNAi" id="2647"/>
<dbReference type="Pharos" id="P78537">
    <property type="development level" value="Tbio"/>
</dbReference>
<dbReference type="PRO" id="PR:P78537"/>
<dbReference type="Proteomes" id="UP000005640">
    <property type="component" value="Chromosome 12"/>
</dbReference>
<dbReference type="RNAct" id="P78537">
    <property type="molecule type" value="protein"/>
</dbReference>
<dbReference type="Bgee" id="ENSG00000135441">
    <property type="expression patterns" value="Expressed in mucosa of transverse colon and 100 other cell types or tissues"/>
</dbReference>
<dbReference type="ExpressionAtlas" id="P78537">
    <property type="expression patterns" value="baseline and differential"/>
</dbReference>
<dbReference type="GO" id="GO:1904115">
    <property type="term" value="C:axon cytoplasm"/>
    <property type="evidence" value="ECO:0007669"/>
    <property type="project" value="GOC"/>
</dbReference>
<dbReference type="GO" id="GO:0031083">
    <property type="term" value="C:BLOC-1 complex"/>
    <property type="evidence" value="ECO:0000314"/>
    <property type="project" value="UniProtKB"/>
</dbReference>
<dbReference type="GO" id="GO:0099078">
    <property type="term" value="C:BORC complex"/>
    <property type="evidence" value="ECO:0000314"/>
    <property type="project" value="UniProtKB"/>
</dbReference>
<dbReference type="GO" id="GO:0098574">
    <property type="term" value="C:cytoplasmic side of lysosomal membrane"/>
    <property type="evidence" value="ECO:0000303"/>
    <property type="project" value="ComplexPortal"/>
</dbReference>
<dbReference type="GO" id="GO:0005829">
    <property type="term" value="C:cytosol"/>
    <property type="evidence" value="ECO:0000314"/>
    <property type="project" value="UniProtKB"/>
</dbReference>
<dbReference type="GO" id="GO:0005769">
    <property type="term" value="C:early endosome"/>
    <property type="evidence" value="ECO:0007669"/>
    <property type="project" value="Ensembl"/>
</dbReference>
<dbReference type="GO" id="GO:0005615">
    <property type="term" value="C:extracellular space"/>
    <property type="evidence" value="ECO:0007005"/>
    <property type="project" value="UniProtKB"/>
</dbReference>
<dbReference type="GO" id="GO:0005765">
    <property type="term" value="C:lysosomal membrane"/>
    <property type="evidence" value="ECO:0000304"/>
    <property type="project" value="Reactome"/>
</dbReference>
<dbReference type="GO" id="GO:0005758">
    <property type="term" value="C:mitochondrial intermembrane space"/>
    <property type="evidence" value="ECO:0000314"/>
    <property type="project" value="UniProtKB"/>
</dbReference>
<dbReference type="GO" id="GO:0005759">
    <property type="term" value="C:mitochondrial matrix"/>
    <property type="evidence" value="ECO:0000314"/>
    <property type="project" value="UniProtKB"/>
</dbReference>
<dbReference type="GO" id="GO:0061733">
    <property type="term" value="F:protein-lysine-acetyltransferase activity"/>
    <property type="evidence" value="ECO:0000315"/>
    <property type="project" value="UniProtKB"/>
</dbReference>
<dbReference type="GO" id="GO:0009060">
    <property type="term" value="P:aerobic respiration"/>
    <property type="evidence" value="ECO:0000315"/>
    <property type="project" value="UniProtKB"/>
</dbReference>
<dbReference type="GO" id="GO:0008089">
    <property type="term" value="P:anterograde axonal transport"/>
    <property type="evidence" value="ECO:0000250"/>
    <property type="project" value="UniProtKB"/>
</dbReference>
<dbReference type="GO" id="GO:0048490">
    <property type="term" value="P:anterograde synaptic vesicle transport"/>
    <property type="evidence" value="ECO:0000250"/>
    <property type="project" value="UniProtKB"/>
</dbReference>
<dbReference type="GO" id="GO:0016197">
    <property type="term" value="P:endosomal transport"/>
    <property type="evidence" value="ECO:0000318"/>
    <property type="project" value="GO_Central"/>
</dbReference>
<dbReference type="GO" id="GO:0032418">
    <property type="term" value="P:lysosome localization"/>
    <property type="evidence" value="ECO:0000315"/>
    <property type="project" value="UniProtKB"/>
</dbReference>
<dbReference type="GO" id="GO:0032438">
    <property type="term" value="P:melanosome organization"/>
    <property type="evidence" value="ECO:0000303"/>
    <property type="project" value="UniProtKB"/>
</dbReference>
<dbReference type="GO" id="GO:0031175">
    <property type="term" value="P:neuron projection development"/>
    <property type="evidence" value="ECO:0000250"/>
    <property type="project" value="UniProtKB"/>
</dbReference>
<dbReference type="GO" id="GO:0072384">
    <property type="term" value="P:organelle transport along microtubule"/>
    <property type="evidence" value="ECO:0000303"/>
    <property type="project" value="ComplexPortal"/>
</dbReference>
<dbReference type="GO" id="GO:0018394">
    <property type="term" value="P:peptidyl-lysine acetylation"/>
    <property type="evidence" value="ECO:0000315"/>
    <property type="project" value="UniProtKB"/>
</dbReference>
<dbReference type="GO" id="GO:0060155">
    <property type="term" value="P:platelet dense granule organization"/>
    <property type="evidence" value="ECO:0000303"/>
    <property type="project" value="UniProtKB"/>
</dbReference>
<dbReference type="GO" id="GO:0051036">
    <property type="term" value="P:regulation of endosome size"/>
    <property type="evidence" value="ECO:0000303"/>
    <property type="project" value="ComplexPortal"/>
</dbReference>
<dbReference type="GO" id="GO:0062196">
    <property type="term" value="P:regulation of lysosome size"/>
    <property type="evidence" value="ECO:0000303"/>
    <property type="project" value="ComplexPortal"/>
</dbReference>
<dbReference type="InterPro" id="IPR009395">
    <property type="entry name" value="BLOC1S1"/>
</dbReference>
<dbReference type="PANTHER" id="PTHR13073:SF0">
    <property type="entry name" value="BIOGENESIS OF LYSOSOME-RELATED ORGANELLES COMPLEX 1 SUBUNIT 1"/>
    <property type="match status" value="1"/>
</dbReference>
<dbReference type="PANTHER" id="PTHR13073">
    <property type="entry name" value="BLOC-1 COMPLEX SUBUNIT 1"/>
    <property type="match status" value="1"/>
</dbReference>
<dbReference type="Pfam" id="PF06320">
    <property type="entry name" value="GCN5L1"/>
    <property type="match status" value="1"/>
</dbReference>
<sequence>MAPGSRGERSSFRSRRGPGVPSPQPDVTMLSRLLKEHQAKQNERKELQEKRRREAITAATCLTEALVDHLNVGVAQAYMNQRKLDHEVKTLQVQAAQFAKQTGQWIGMVENFNQALKEIGDVENWARSIELDMRTIATALEYVYKGQLQSAPS</sequence>
<reference key="1">
    <citation type="journal article" date="1995" name="DNA Res.">
        <title>Molecular cloning of a novel human cDNA, RT14, containing a putative ORF highly conserved between human, fruit fly, and nematode.</title>
        <authorList>
            <person name="Watanabe T.K."/>
            <person name="Fujiwara T."/>
            <person name="Shinomiya H."/>
            <person name="Kuga Y."/>
            <person name="Hishigaki H."/>
            <person name="Nakamura Y."/>
            <person name="Hirai Y."/>
        </authorList>
    </citation>
    <scope>NUCLEOTIDE SEQUENCE [MRNA] (ISOFORM 2)</scope>
    <source>
        <tissue>Fetal brain</tissue>
    </source>
</reference>
<reference key="2">
    <citation type="journal article" date="2006" name="Nature">
        <title>The finished DNA sequence of human chromosome 12.</title>
        <authorList>
            <person name="Scherer S.E."/>
            <person name="Muzny D.M."/>
            <person name="Buhay C.J."/>
            <person name="Chen R."/>
            <person name="Cree A."/>
            <person name="Ding Y."/>
            <person name="Dugan-Rocha S."/>
            <person name="Gill R."/>
            <person name="Gunaratne P."/>
            <person name="Harris R.A."/>
            <person name="Hawes A.C."/>
            <person name="Hernandez J."/>
            <person name="Hodgson A.V."/>
            <person name="Hume J."/>
            <person name="Jackson A."/>
            <person name="Khan Z.M."/>
            <person name="Kovar-Smith C."/>
            <person name="Lewis L.R."/>
            <person name="Lozado R.J."/>
            <person name="Metzker M.L."/>
            <person name="Milosavljevic A."/>
            <person name="Miner G.R."/>
            <person name="Montgomery K.T."/>
            <person name="Morgan M.B."/>
            <person name="Nazareth L.V."/>
            <person name="Scott G."/>
            <person name="Sodergren E."/>
            <person name="Song X.-Z."/>
            <person name="Steffen D."/>
            <person name="Lovering R.C."/>
            <person name="Wheeler D.A."/>
            <person name="Worley K.C."/>
            <person name="Yuan Y."/>
            <person name="Zhang Z."/>
            <person name="Adams C.Q."/>
            <person name="Ansari-Lari M.A."/>
            <person name="Ayele M."/>
            <person name="Brown M.J."/>
            <person name="Chen G."/>
            <person name="Chen Z."/>
            <person name="Clerc-Blankenburg K.P."/>
            <person name="Davis C."/>
            <person name="Delgado O."/>
            <person name="Dinh H.H."/>
            <person name="Draper H."/>
            <person name="Gonzalez-Garay M.L."/>
            <person name="Havlak P."/>
            <person name="Jackson L.R."/>
            <person name="Jacob L.S."/>
            <person name="Kelly S.H."/>
            <person name="Li L."/>
            <person name="Li Z."/>
            <person name="Liu J."/>
            <person name="Liu W."/>
            <person name="Lu J."/>
            <person name="Maheshwari M."/>
            <person name="Nguyen B.-V."/>
            <person name="Okwuonu G.O."/>
            <person name="Pasternak S."/>
            <person name="Perez L.M."/>
            <person name="Plopper F.J.H."/>
            <person name="Santibanez J."/>
            <person name="Shen H."/>
            <person name="Tabor P.E."/>
            <person name="Verduzco D."/>
            <person name="Waldron L."/>
            <person name="Wang Q."/>
            <person name="Williams G.A."/>
            <person name="Zhang J."/>
            <person name="Zhou J."/>
            <person name="Allen C.C."/>
            <person name="Amin A.G."/>
            <person name="Anyalebechi V."/>
            <person name="Bailey M."/>
            <person name="Barbaria J.A."/>
            <person name="Bimage K.E."/>
            <person name="Bryant N.P."/>
            <person name="Burch P.E."/>
            <person name="Burkett C.E."/>
            <person name="Burrell K.L."/>
            <person name="Calderon E."/>
            <person name="Cardenas V."/>
            <person name="Carter K."/>
            <person name="Casias K."/>
            <person name="Cavazos I."/>
            <person name="Cavazos S.R."/>
            <person name="Ceasar H."/>
            <person name="Chacko J."/>
            <person name="Chan S.N."/>
            <person name="Chavez D."/>
            <person name="Christopoulos C."/>
            <person name="Chu J."/>
            <person name="Cockrell R."/>
            <person name="Cox C.D."/>
            <person name="Dang M."/>
            <person name="Dathorne S.R."/>
            <person name="David R."/>
            <person name="Davis C.M."/>
            <person name="Davy-Carroll L."/>
            <person name="Deshazo D.R."/>
            <person name="Donlin J.E."/>
            <person name="D'Souza L."/>
            <person name="Eaves K.A."/>
            <person name="Egan A."/>
            <person name="Emery-Cohen A.J."/>
            <person name="Escotto M."/>
            <person name="Flagg N."/>
            <person name="Forbes L.D."/>
            <person name="Gabisi A.M."/>
            <person name="Garza M."/>
            <person name="Hamilton C."/>
            <person name="Henderson N."/>
            <person name="Hernandez O."/>
            <person name="Hines S."/>
            <person name="Hogues M.E."/>
            <person name="Huang M."/>
            <person name="Idlebird D.G."/>
            <person name="Johnson R."/>
            <person name="Jolivet A."/>
            <person name="Jones S."/>
            <person name="Kagan R."/>
            <person name="King L.M."/>
            <person name="Leal B."/>
            <person name="Lebow H."/>
            <person name="Lee S."/>
            <person name="LeVan J.M."/>
            <person name="Lewis L.C."/>
            <person name="London P."/>
            <person name="Lorensuhewa L.M."/>
            <person name="Loulseged H."/>
            <person name="Lovett D.A."/>
            <person name="Lucier A."/>
            <person name="Lucier R.L."/>
            <person name="Ma J."/>
            <person name="Madu R.C."/>
            <person name="Mapua P."/>
            <person name="Martindale A.D."/>
            <person name="Martinez E."/>
            <person name="Massey E."/>
            <person name="Mawhiney S."/>
            <person name="Meador M.G."/>
            <person name="Mendez S."/>
            <person name="Mercado C."/>
            <person name="Mercado I.C."/>
            <person name="Merritt C.E."/>
            <person name="Miner Z.L."/>
            <person name="Minja E."/>
            <person name="Mitchell T."/>
            <person name="Mohabbat F."/>
            <person name="Mohabbat K."/>
            <person name="Montgomery B."/>
            <person name="Moore N."/>
            <person name="Morris S."/>
            <person name="Munidasa M."/>
            <person name="Ngo R.N."/>
            <person name="Nguyen N.B."/>
            <person name="Nickerson E."/>
            <person name="Nwaokelemeh O.O."/>
            <person name="Nwokenkwo S."/>
            <person name="Obregon M."/>
            <person name="Oguh M."/>
            <person name="Oragunye N."/>
            <person name="Oviedo R.J."/>
            <person name="Parish B.J."/>
            <person name="Parker D.N."/>
            <person name="Parrish J."/>
            <person name="Parks K.L."/>
            <person name="Paul H.A."/>
            <person name="Payton B.A."/>
            <person name="Perez A."/>
            <person name="Perrin W."/>
            <person name="Pickens A."/>
            <person name="Primus E.L."/>
            <person name="Pu L.-L."/>
            <person name="Puazo M."/>
            <person name="Quiles M.M."/>
            <person name="Quiroz J.B."/>
            <person name="Rabata D."/>
            <person name="Reeves K."/>
            <person name="Ruiz S.J."/>
            <person name="Shao H."/>
            <person name="Sisson I."/>
            <person name="Sonaike T."/>
            <person name="Sorelle R.P."/>
            <person name="Sutton A.E."/>
            <person name="Svatek A.F."/>
            <person name="Svetz L.A."/>
            <person name="Tamerisa K.S."/>
            <person name="Taylor T.R."/>
            <person name="Teague B."/>
            <person name="Thomas N."/>
            <person name="Thorn R.D."/>
            <person name="Trejos Z.Y."/>
            <person name="Trevino B.K."/>
            <person name="Ukegbu O.N."/>
            <person name="Urban J.B."/>
            <person name="Vasquez L.I."/>
            <person name="Vera V.A."/>
            <person name="Villasana D.M."/>
            <person name="Wang L."/>
            <person name="Ward-Moore S."/>
            <person name="Warren J.T."/>
            <person name="Wei X."/>
            <person name="White F."/>
            <person name="Williamson A.L."/>
            <person name="Wleczyk R."/>
            <person name="Wooden H.S."/>
            <person name="Wooden S.H."/>
            <person name="Yen J."/>
            <person name="Yoon L."/>
            <person name="Yoon V."/>
            <person name="Zorrilla S.E."/>
            <person name="Nelson D."/>
            <person name="Kucherlapati R."/>
            <person name="Weinstock G."/>
            <person name="Gibbs R.A."/>
        </authorList>
    </citation>
    <scope>NUCLEOTIDE SEQUENCE [LARGE SCALE GENOMIC DNA]</scope>
</reference>
<reference key="3">
    <citation type="journal article" date="2004" name="Genome Res.">
        <title>The status, quality, and expansion of the NIH full-length cDNA project: the Mammalian Gene Collection (MGC).</title>
        <authorList>
            <consortium name="The MGC Project Team"/>
        </authorList>
    </citation>
    <scope>NUCLEOTIDE SEQUENCE [LARGE SCALE MRNA] (ISOFORM 2)</scope>
    <source>
        <tissue>Brain</tissue>
    </source>
</reference>
<reference key="4">
    <citation type="journal article" date="1996" name="Cytogenet. Cell Genet.">
        <title>Isolation and characterization of a human cDNA clone (GCN5L1) homologous to GCN5, a yeast transcription activator.</title>
        <authorList>
            <person name="Inoue M."/>
            <person name="Isomura M."/>
            <person name="Ikegawa S."/>
            <person name="Fujiwara T."/>
            <person name="Shin S."/>
            <person name="Moriya H."/>
            <person name="Nakamura Y."/>
        </authorList>
    </citation>
    <scope>NUCLEOTIDE SEQUENCE [MRNA] OF 11-153 (ISOFORM 1)</scope>
</reference>
<reference key="5">
    <citation type="journal article" date="2004" name="J. Biol. Chem.">
        <title>Identification of snapin and three novel proteins (BLOS1, BLOS2, and BLOS3/reduced pigmentation) as subunits of biogenesis of lysosome-related organelles complex-1 (BLOC-1).</title>
        <authorList>
            <person name="Starcevic M."/>
            <person name="Dell'Angelica E.C."/>
        </authorList>
    </citation>
    <scope>IDENTIFICATION IN THE BLOC-1 COMPLEX</scope>
</reference>
<reference key="6">
    <citation type="journal article" date="2007" name="Mol. Biol. Cell">
        <title>BLOC-1 is required for cargo-specific sorting from vacuolar early endosomes toward lysosome-related organelles.</title>
        <authorList>
            <person name="Setty S.R."/>
            <person name="Tenza D."/>
            <person name="Truschel S.T."/>
            <person name="Chou E."/>
            <person name="Sviderskaya E.V."/>
            <person name="Theos A.C."/>
            <person name="Lamoreux M.L."/>
            <person name="Di Pietro S.M."/>
            <person name="Starcevic M."/>
            <person name="Bennett D.C."/>
            <person name="Dell'Angelica E.C."/>
            <person name="Raposo G."/>
            <person name="Marks M.S."/>
        </authorList>
    </citation>
    <scope>FUNCTION</scope>
</reference>
<reference key="7">
    <citation type="journal article" date="2011" name="BMC Syst. Biol.">
        <title>Initial characterization of the human central proteome.</title>
        <authorList>
            <person name="Burkard T.R."/>
            <person name="Planyavsky M."/>
            <person name="Kaupe I."/>
            <person name="Breitwieser F.P."/>
            <person name="Buerckstuemmer T."/>
            <person name="Bennett K.L."/>
            <person name="Superti-Furga G."/>
            <person name="Colinge J."/>
        </authorList>
    </citation>
    <scope>IDENTIFICATION BY MASS SPECTROMETRY [LARGE SCALE ANALYSIS]</scope>
</reference>
<reference key="8">
    <citation type="journal article" date="2012" name="Biochem. J.">
        <title>Identification of a molecular component of the mitochondrial acetyl transferase program; a novel role for GCN5L1.</title>
        <authorList>
            <person name="Scott I."/>
            <person name="Webster B.R."/>
            <person name="Li J.H."/>
            <person name="Sack M.N."/>
        </authorList>
    </citation>
    <scope>FUNCTION IN MITOCHONDRIAL PROTEIN ACETYLATION</scope>
    <scope>FUNCTION IN AEROBIC RESPIRATION</scope>
    <scope>SUBCELLULAR LOCATION</scope>
    <scope>INTERACTION WITH ATP5F1A AND NDUFA9</scope>
</reference>
<reference key="9">
    <citation type="journal article" date="2012" name="J. Biol. Chem.">
        <title>Assembly and architecture of biogenesis of lysosome-related organelles complex-1 (BLOC-1).</title>
        <authorList>
            <person name="Lee H.H."/>
            <person name="Nemecek D."/>
            <person name="Schindler C."/>
            <person name="Smith W.J."/>
            <person name="Ghirlando R."/>
            <person name="Steven A.C."/>
            <person name="Bonifacino J.S."/>
            <person name="Hurley J.H."/>
        </authorList>
    </citation>
    <scope>IDENTIFICATION IN THE BLOC-1 COMPLEX</scope>
    <scope>COMPOSITION OF THE BLOC-1 COMPLEX</scope>
</reference>
<reference key="10">
    <citation type="journal article" date="2015" name="Dev. Cell">
        <title>BORC, a multisubunit complex that regulates lysosome positioning.</title>
        <authorList>
            <person name="Pu J."/>
            <person name="Schindler C."/>
            <person name="Jia R."/>
            <person name="Jarnik M."/>
            <person name="Backlund P."/>
            <person name="Bonifacino J.S."/>
        </authorList>
    </citation>
    <scope>FUNCTION</scope>
    <scope>IDENTIFICATION OF THE BORC COMPLEX</scope>
    <scope>SUBCELLULAR LOCATION</scope>
</reference>
<reference key="11">
    <citation type="journal article" date="2024" name="Cell. Signal.">
        <title>GCN5L1-mediated acetylation prevents Rictor degradation in cardiac cells after hypoxic stress.</title>
        <authorList>
            <person name="Bugga P."/>
            <person name="Manning J.R."/>
            <person name="Mushala B.A.S."/>
            <person name="Stoner M.W."/>
            <person name="Sembrat J."/>
            <person name="Scott I."/>
        </authorList>
    </citation>
    <scope>FUNCTION</scope>
    <scope>CATALYTIC ACTIVITY</scope>
</reference>
<protein>
    <recommendedName>
        <fullName>Biogenesis of lysosome-related organelles complex 1 subunit 1</fullName>
        <shortName>BLOC-1 subunit 1</shortName>
    </recommendedName>
    <alternativeName>
        <fullName evidence="11">GCN5-like protein 1</fullName>
    </alternativeName>
    <alternativeName>
        <fullName>Protein RT14</fullName>
    </alternativeName>
    <alternativeName>
        <fullName evidence="13">Protein acetyltransferase BLOC1S1</fullName>
        <ecNumber evidence="15">2.3.1.-</ecNumber>
    </alternativeName>
</protein>
<evidence type="ECO:0000250" key="1">
    <source>
        <dbReference type="UniProtKB" id="O55102"/>
    </source>
</evidence>
<evidence type="ECO:0000255" key="2"/>
<evidence type="ECO:0000256" key="3">
    <source>
        <dbReference type="SAM" id="MobiDB-lite"/>
    </source>
</evidence>
<evidence type="ECO:0000269" key="4">
    <source>
    </source>
</evidence>
<evidence type="ECO:0000269" key="5">
    <source>
    </source>
</evidence>
<evidence type="ECO:0000269" key="6">
    <source>
    </source>
</evidence>
<evidence type="ECO:0000269" key="7">
    <source>
    </source>
</evidence>
<evidence type="ECO:0000269" key="8">
    <source>
    </source>
</evidence>
<evidence type="ECO:0000269" key="9">
    <source>
    </source>
</evidence>
<evidence type="ECO:0000303" key="10">
    <source>
    </source>
</evidence>
<evidence type="ECO:0000303" key="11">
    <source>
    </source>
</evidence>
<evidence type="ECO:0000303" key="12">
    <source>
    </source>
</evidence>
<evidence type="ECO:0000305" key="13"/>
<evidence type="ECO:0000305" key="14">
    <source>
    </source>
</evidence>
<evidence type="ECO:0000305" key="15">
    <source>
    </source>
</evidence>
<accession>P78537</accession>
<accession>A1L4Q9</accession>
<accession>Q6NZ45</accession>
<organism>
    <name type="scientific">Homo sapiens</name>
    <name type="common">Human</name>
    <dbReference type="NCBI Taxonomy" id="9606"/>
    <lineage>
        <taxon>Eukaryota</taxon>
        <taxon>Metazoa</taxon>
        <taxon>Chordata</taxon>
        <taxon>Craniata</taxon>
        <taxon>Vertebrata</taxon>
        <taxon>Euteleostomi</taxon>
        <taxon>Mammalia</taxon>
        <taxon>Eutheria</taxon>
        <taxon>Euarchontoglires</taxon>
        <taxon>Primates</taxon>
        <taxon>Haplorrhini</taxon>
        <taxon>Catarrhini</taxon>
        <taxon>Hominidae</taxon>
        <taxon>Homo</taxon>
    </lineage>
</organism>
<proteinExistence type="evidence at protein level"/>
<gene>
    <name type="primary">BLOC1S1</name>
    <name type="synonym">BLOS1</name>
    <name evidence="11" type="synonym">GCN5L1</name>
    <name type="synonym">RT14</name>
</gene>